<reference key="1">
    <citation type="journal article" date="2005" name="Nature">
        <title>The genome of the social amoeba Dictyostelium discoideum.</title>
        <authorList>
            <person name="Eichinger L."/>
            <person name="Pachebat J.A."/>
            <person name="Gloeckner G."/>
            <person name="Rajandream M.A."/>
            <person name="Sucgang R."/>
            <person name="Berriman M."/>
            <person name="Song J."/>
            <person name="Olsen R."/>
            <person name="Szafranski K."/>
            <person name="Xu Q."/>
            <person name="Tunggal B."/>
            <person name="Kummerfeld S."/>
            <person name="Madera M."/>
            <person name="Konfortov B.A."/>
            <person name="Rivero F."/>
            <person name="Bankier A.T."/>
            <person name="Lehmann R."/>
            <person name="Hamlin N."/>
            <person name="Davies R."/>
            <person name="Gaudet P."/>
            <person name="Fey P."/>
            <person name="Pilcher K."/>
            <person name="Chen G."/>
            <person name="Saunders D."/>
            <person name="Sodergren E.J."/>
            <person name="Davis P."/>
            <person name="Kerhornou A."/>
            <person name="Nie X."/>
            <person name="Hall N."/>
            <person name="Anjard C."/>
            <person name="Hemphill L."/>
            <person name="Bason N."/>
            <person name="Farbrother P."/>
            <person name="Desany B."/>
            <person name="Just E."/>
            <person name="Morio T."/>
            <person name="Rost R."/>
            <person name="Churcher C.M."/>
            <person name="Cooper J."/>
            <person name="Haydock S."/>
            <person name="van Driessche N."/>
            <person name="Cronin A."/>
            <person name="Goodhead I."/>
            <person name="Muzny D.M."/>
            <person name="Mourier T."/>
            <person name="Pain A."/>
            <person name="Lu M."/>
            <person name="Harper D."/>
            <person name="Lindsay R."/>
            <person name="Hauser H."/>
            <person name="James K.D."/>
            <person name="Quiles M."/>
            <person name="Madan Babu M."/>
            <person name="Saito T."/>
            <person name="Buchrieser C."/>
            <person name="Wardroper A."/>
            <person name="Felder M."/>
            <person name="Thangavelu M."/>
            <person name="Johnson D."/>
            <person name="Knights A."/>
            <person name="Loulseged H."/>
            <person name="Mungall K.L."/>
            <person name="Oliver K."/>
            <person name="Price C."/>
            <person name="Quail M.A."/>
            <person name="Urushihara H."/>
            <person name="Hernandez J."/>
            <person name="Rabbinowitsch E."/>
            <person name="Steffen D."/>
            <person name="Sanders M."/>
            <person name="Ma J."/>
            <person name="Kohara Y."/>
            <person name="Sharp S."/>
            <person name="Simmonds M.N."/>
            <person name="Spiegler S."/>
            <person name="Tivey A."/>
            <person name="Sugano S."/>
            <person name="White B."/>
            <person name="Walker D."/>
            <person name="Woodward J.R."/>
            <person name="Winckler T."/>
            <person name="Tanaka Y."/>
            <person name="Shaulsky G."/>
            <person name="Schleicher M."/>
            <person name="Weinstock G.M."/>
            <person name="Rosenthal A."/>
            <person name="Cox E.C."/>
            <person name="Chisholm R.L."/>
            <person name="Gibbs R.A."/>
            <person name="Loomis W.F."/>
            <person name="Platzer M."/>
            <person name="Kay R.R."/>
            <person name="Williams J.G."/>
            <person name="Dear P.H."/>
            <person name="Noegel A.A."/>
            <person name="Barrell B.G."/>
            <person name="Kuspa A."/>
        </authorList>
    </citation>
    <scope>NUCLEOTIDE SEQUENCE [LARGE SCALE GENOMIC DNA]</scope>
    <source>
        <strain>AX4</strain>
    </source>
</reference>
<protein>
    <recommendedName>
        <fullName>TNF receptor-associated factor family protein DDB_G0267754</fullName>
    </recommendedName>
</protein>
<proteinExistence type="inferred from homology"/>
<accession>Q55GA0</accession>
<name>Y7754_DICDI</name>
<comment type="function">
    <text evidence="1">Probable adapter protein and signal transducer that links members of the tumor necrosis factor receptor family to different signaling pathways by association with the receptor cytoplasmic domain and kinases.</text>
</comment>
<comment type="subcellular location">
    <subcellularLocation>
        <location evidence="1">Cytoplasm</location>
    </subcellularLocation>
</comment>
<comment type="domain">
    <text>The MATH/TRAF domain binds to receptor cytoplasmic domains.</text>
</comment>
<comment type="similarity">
    <text evidence="5">Belongs to the TNF receptor-associated factor family. A subfamily.</text>
</comment>
<keyword id="KW-0963">Cytoplasm</keyword>
<keyword id="KW-0479">Metal-binding</keyword>
<keyword id="KW-1185">Reference proteome</keyword>
<keyword id="KW-0677">Repeat</keyword>
<keyword id="KW-0862">Zinc</keyword>
<keyword id="KW-0863">Zinc-finger</keyword>
<dbReference type="EMBL" id="AAFI02000003">
    <property type="protein sequence ID" value="EAL73330.1"/>
    <property type="molecule type" value="Genomic_DNA"/>
</dbReference>
<dbReference type="RefSeq" id="XP_647284.1">
    <property type="nucleotide sequence ID" value="XM_642192.1"/>
</dbReference>
<dbReference type="SMR" id="Q55GA0"/>
<dbReference type="FunCoup" id="Q55GA0">
    <property type="interactions" value="11"/>
</dbReference>
<dbReference type="STRING" id="44689.Q55GA0"/>
<dbReference type="PaxDb" id="44689-DDB0189521"/>
<dbReference type="EnsemblProtists" id="EAL73330">
    <property type="protein sequence ID" value="EAL73330"/>
    <property type="gene ID" value="DDB_G0267754"/>
</dbReference>
<dbReference type="GeneID" id="8616090"/>
<dbReference type="KEGG" id="ddi:DDB_G0267754"/>
<dbReference type="dictyBase" id="DDB_G0267754"/>
<dbReference type="VEuPathDB" id="AmoebaDB:DDB_G0267754"/>
<dbReference type="eggNOG" id="KOG0297">
    <property type="taxonomic scope" value="Eukaryota"/>
</dbReference>
<dbReference type="HOGENOM" id="CLU_040980_0_0_1"/>
<dbReference type="InParanoid" id="Q55GA0"/>
<dbReference type="OMA" id="RYQDIGH"/>
<dbReference type="PhylomeDB" id="Q55GA0"/>
<dbReference type="PRO" id="PR:Q55GA0"/>
<dbReference type="Proteomes" id="UP000002195">
    <property type="component" value="Chromosome 1"/>
</dbReference>
<dbReference type="GO" id="GO:0005737">
    <property type="term" value="C:cytoplasm"/>
    <property type="evidence" value="ECO:0000318"/>
    <property type="project" value="GO_Central"/>
</dbReference>
<dbReference type="GO" id="GO:0008270">
    <property type="term" value="F:zinc ion binding"/>
    <property type="evidence" value="ECO:0007669"/>
    <property type="project" value="UniProtKB-KW"/>
</dbReference>
<dbReference type="CDD" id="cd00121">
    <property type="entry name" value="MATH"/>
    <property type="match status" value="1"/>
</dbReference>
<dbReference type="Gene3D" id="2.60.210.10">
    <property type="entry name" value="Apoptosis, Tumor Necrosis Factor Receptor Associated Protein 2, Chain A"/>
    <property type="match status" value="1"/>
</dbReference>
<dbReference type="Gene3D" id="3.30.40.10">
    <property type="entry name" value="Zinc/RING finger domain, C3HC4 (zinc finger)"/>
    <property type="match status" value="4"/>
</dbReference>
<dbReference type="InterPro" id="IPR002083">
    <property type="entry name" value="MATH/TRAF_dom"/>
</dbReference>
<dbReference type="InterPro" id="IPR008974">
    <property type="entry name" value="TRAF-like"/>
</dbReference>
<dbReference type="InterPro" id="IPR013083">
    <property type="entry name" value="Znf_RING/FYVE/PHD"/>
</dbReference>
<dbReference type="InterPro" id="IPR001293">
    <property type="entry name" value="Znf_TRAF"/>
</dbReference>
<dbReference type="PANTHER" id="PTHR10131:SF156">
    <property type="entry name" value="RING-TYPE DOMAIN-CONTAINING PROTEIN-RELATED"/>
    <property type="match status" value="1"/>
</dbReference>
<dbReference type="PANTHER" id="PTHR10131">
    <property type="entry name" value="TNF RECEPTOR ASSOCIATED FACTOR"/>
    <property type="match status" value="1"/>
</dbReference>
<dbReference type="Pfam" id="PF22486">
    <property type="entry name" value="MATH_2"/>
    <property type="match status" value="1"/>
</dbReference>
<dbReference type="Pfam" id="PF02176">
    <property type="entry name" value="zf-TRAF"/>
    <property type="match status" value="1"/>
</dbReference>
<dbReference type="SUPFAM" id="SSF57850">
    <property type="entry name" value="RING/U-box"/>
    <property type="match status" value="1"/>
</dbReference>
<dbReference type="SUPFAM" id="SSF49599">
    <property type="entry name" value="TRAF domain-like"/>
    <property type="match status" value="2"/>
</dbReference>
<dbReference type="PROSITE" id="PS50144">
    <property type="entry name" value="MATH"/>
    <property type="match status" value="1"/>
</dbReference>
<dbReference type="PROSITE" id="PS50145">
    <property type="entry name" value="ZF_TRAF"/>
    <property type="match status" value="1"/>
</dbReference>
<sequence length="462" mass="53475">MTSLISITLDELLINEDINDDYTCCVCECLLIEALQCRNGHVACKNCFIKIVKSKKECMTCRCEIKSIESLSKNRYLEKEIRKLNINCPNSFLKRELNLNNNNKNGNGNEGSSANEIEQPQQPQQQQPQELIKDINNGCKEILTIDQLDSHLKQCEYRFLKCTNLYANDLCSELDICGYDYRYNQSEKHRDECPYGIIGCTLCGKDCSRVDIESHTENHCPKLLVKCPTCNQDQLIARCDLDDHLSVDCAMIEIDCILKESGCKERVKRNQLANHLSSDNHLLFINNQFNQQNDIINQLKLELSHCNDLNEILTAKLDRYNNDNTMFRGKWVISNWTDKLNQYPPKKYLSLDFNLSQNKPFSIRVYPNGSSVMWHNCTISLVKLYQTESTIKFSFEIENEDPLKNDLQTKTDIFKGLNDSWSLQFFKVCDQANNNGFIINDTLTINFSIKIKKCFENIFITE</sequence>
<gene>
    <name type="ORF">DDB_G0267754</name>
</gene>
<feature type="chain" id="PRO_0000393758" description="TNF receptor-associated factor family protein DDB_G0267754">
    <location>
        <begin position="1"/>
        <end position="462"/>
    </location>
</feature>
<feature type="domain" description="MATH" evidence="2">
    <location>
        <begin position="326"/>
        <end position="449"/>
    </location>
</feature>
<feature type="zinc finger region" description="RING-type; degenerate">
    <location>
        <begin position="24"/>
        <end position="62"/>
    </location>
</feature>
<feature type="zinc finger region" description="TRAF-type 1" evidence="3">
    <location>
        <begin position="150"/>
        <end position="217"/>
    </location>
</feature>
<feature type="zinc finger region" description="TRAF-type 2" evidence="3">
    <location>
        <begin position="214"/>
        <end position="273"/>
    </location>
</feature>
<feature type="region of interest" description="Disordered" evidence="4">
    <location>
        <begin position="104"/>
        <end position="127"/>
    </location>
</feature>
<organism>
    <name type="scientific">Dictyostelium discoideum</name>
    <name type="common">Social amoeba</name>
    <dbReference type="NCBI Taxonomy" id="44689"/>
    <lineage>
        <taxon>Eukaryota</taxon>
        <taxon>Amoebozoa</taxon>
        <taxon>Evosea</taxon>
        <taxon>Eumycetozoa</taxon>
        <taxon>Dictyostelia</taxon>
        <taxon>Dictyosteliales</taxon>
        <taxon>Dictyosteliaceae</taxon>
        <taxon>Dictyostelium</taxon>
    </lineage>
</organism>
<evidence type="ECO:0000250" key="1"/>
<evidence type="ECO:0000255" key="2">
    <source>
        <dbReference type="PROSITE-ProRule" id="PRU00129"/>
    </source>
</evidence>
<evidence type="ECO:0000255" key="3">
    <source>
        <dbReference type="PROSITE-ProRule" id="PRU00207"/>
    </source>
</evidence>
<evidence type="ECO:0000256" key="4">
    <source>
        <dbReference type="SAM" id="MobiDB-lite"/>
    </source>
</evidence>
<evidence type="ECO:0000305" key="5"/>